<name>DFRA_HORVU</name>
<organism>
    <name type="scientific">Hordeum vulgare</name>
    <name type="common">Barley</name>
    <dbReference type="NCBI Taxonomy" id="4513"/>
    <lineage>
        <taxon>Eukaryota</taxon>
        <taxon>Viridiplantae</taxon>
        <taxon>Streptophyta</taxon>
        <taxon>Embryophyta</taxon>
        <taxon>Tracheophyta</taxon>
        <taxon>Spermatophyta</taxon>
        <taxon>Magnoliopsida</taxon>
        <taxon>Liliopsida</taxon>
        <taxon>Poales</taxon>
        <taxon>Poaceae</taxon>
        <taxon>BOP clade</taxon>
        <taxon>Pooideae</taxon>
        <taxon>Triticodae</taxon>
        <taxon>Triticeae</taxon>
        <taxon>Hordeinae</taxon>
        <taxon>Hordeum</taxon>
    </lineage>
</organism>
<comment type="function">
    <text evidence="2">Bifunctional enzyme involved in flavonoid metabolism.</text>
</comment>
<comment type="catalytic activity">
    <reaction evidence="2">
        <text>a (2R,3S,4S)-leucoanthocyanidin + NADP(+) = a (2R,3R)-dihydroflavonol + NADPH + H(+)</text>
        <dbReference type="Rhea" id="RHEA:54444"/>
        <dbReference type="ChEBI" id="CHEBI:15378"/>
        <dbReference type="ChEBI" id="CHEBI:57783"/>
        <dbReference type="ChEBI" id="CHEBI:58349"/>
        <dbReference type="ChEBI" id="CHEBI:138176"/>
        <dbReference type="ChEBI" id="CHEBI:138188"/>
        <dbReference type="EC" id="1.1.1.219"/>
    </reaction>
</comment>
<comment type="catalytic activity">
    <reaction evidence="2">
        <text>(2S)-flavan-4-ol + NADP(+) = (2S)-flavanone + NADPH + H(+)</text>
        <dbReference type="Rhea" id="RHEA:11228"/>
        <dbReference type="ChEBI" id="CHEBI:15378"/>
        <dbReference type="ChEBI" id="CHEBI:15605"/>
        <dbReference type="ChEBI" id="CHEBI:15606"/>
        <dbReference type="ChEBI" id="CHEBI:57783"/>
        <dbReference type="ChEBI" id="CHEBI:58349"/>
        <dbReference type="EC" id="1.1.1.234"/>
    </reaction>
</comment>
<comment type="pathway">
    <text>Pigment biosynthesis; anthocyanin biosynthesis.</text>
</comment>
<comment type="similarity">
    <text evidence="3">Belongs to the NAD(P)-dependent epimerase/dehydratase family. Dihydroflavonol-4-reductase subfamily.</text>
</comment>
<accession>P51106</accession>
<keyword id="KW-0284">Flavonoid biosynthesis</keyword>
<keyword id="KW-0521">NADP</keyword>
<keyword id="KW-0560">Oxidoreductase</keyword>
<evidence type="ECO:0000250" key="1">
    <source>
        <dbReference type="UniProtKB" id="A0A059TC02"/>
    </source>
</evidence>
<evidence type="ECO:0000250" key="2">
    <source>
        <dbReference type="UniProtKB" id="Q9XES5"/>
    </source>
</evidence>
<evidence type="ECO:0000305" key="3"/>
<feature type="chain" id="PRO_0000215567" description="Dihydroflavonol 4-reductase">
    <location>
        <begin position="1"/>
        <end position="354"/>
    </location>
</feature>
<feature type="binding site" evidence="1">
    <location>
        <position position="44"/>
    </location>
    <ligand>
        <name>NADP(+)</name>
        <dbReference type="ChEBI" id="CHEBI:58349"/>
    </ligand>
</feature>
<feature type="binding site" evidence="1">
    <location>
        <position position="163"/>
    </location>
    <ligand>
        <name>NADP(+)</name>
        <dbReference type="ChEBI" id="CHEBI:58349"/>
    </ligand>
</feature>
<reference key="1">
    <citation type="journal article" date="1991" name="Mol. Gen. Genet.">
        <title>Structure of the Hordeum vulgare gene encoding dihydroflavonol-4-reductase and molecular analysis of ant18 mutants blocked in flavonoid synthesis.</title>
        <authorList>
            <person name="Kristiansen K.N."/>
            <person name="Rohde W."/>
        </authorList>
    </citation>
    <scope>NUCLEOTIDE SEQUENCE [GENOMIC DNA]</scope>
    <source>
        <strain>cv. Gula</strain>
    </source>
</reference>
<protein>
    <recommendedName>
        <fullName>Dihydroflavonol 4-reductase</fullName>
        <shortName>DFR</shortName>
        <ecNumber evidence="2">1.1.1.219</ecNumber>
    </recommendedName>
    <alternativeName>
        <fullName>Dihydrokaempferol 4-reductase</fullName>
    </alternativeName>
    <alternativeName>
        <fullName>Flavanone 4-reductase</fullName>
        <shortName>FNR</shortName>
        <ecNumber evidence="2">1.1.1.234</ecNumber>
    </alternativeName>
</protein>
<gene>
    <name type="primary">ANT18</name>
</gene>
<dbReference type="EC" id="1.1.1.219" evidence="2"/>
<dbReference type="EC" id="1.1.1.234" evidence="2"/>
<dbReference type="EMBL" id="S69616">
    <property type="protein sequence ID" value="AAB20555.1"/>
    <property type="molecule type" value="Genomic_DNA"/>
</dbReference>
<dbReference type="PIR" id="S18595">
    <property type="entry name" value="S18595"/>
</dbReference>
<dbReference type="SMR" id="P51106"/>
<dbReference type="OMA" id="ETCWSDV"/>
<dbReference type="UniPathway" id="UPA00009"/>
<dbReference type="ExpressionAtlas" id="P51106">
    <property type="expression patterns" value="baseline and differential"/>
</dbReference>
<dbReference type="GO" id="GO:0045552">
    <property type="term" value="F:dihydrokaempferol 4-reductase activity"/>
    <property type="evidence" value="ECO:0007669"/>
    <property type="project" value="UniProtKB-EC"/>
</dbReference>
<dbReference type="GO" id="GO:0047890">
    <property type="term" value="F:flavanone 4-reductase activity"/>
    <property type="evidence" value="ECO:0007669"/>
    <property type="project" value="UniProtKB-EC"/>
</dbReference>
<dbReference type="GO" id="GO:0009718">
    <property type="term" value="P:anthocyanin-containing compound biosynthetic process"/>
    <property type="evidence" value="ECO:0007669"/>
    <property type="project" value="UniProtKB-UniPathway"/>
</dbReference>
<dbReference type="CDD" id="cd08958">
    <property type="entry name" value="FR_SDR_e"/>
    <property type="match status" value="1"/>
</dbReference>
<dbReference type="FunFam" id="3.40.50.720:FF:000085">
    <property type="entry name" value="Dihydroflavonol reductase"/>
    <property type="match status" value="1"/>
</dbReference>
<dbReference type="Gene3D" id="3.40.50.720">
    <property type="entry name" value="NAD(P)-binding Rossmann-like Domain"/>
    <property type="match status" value="1"/>
</dbReference>
<dbReference type="InterPro" id="IPR001509">
    <property type="entry name" value="Epimerase_deHydtase"/>
</dbReference>
<dbReference type="InterPro" id="IPR036291">
    <property type="entry name" value="NAD(P)-bd_dom_sf"/>
</dbReference>
<dbReference type="InterPro" id="IPR050425">
    <property type="entry name" value="NAD(P)_dehydrat-like"/>
</dbReference>
<dbReference type="PANTHER" id="PTHR10366">
    <property type="entry name" value="NAD DEPENDENT EPIMERASE/DEHYDRATASE"/>
    <property type="match status" value="1"/>
</dbReference>
<dbReference type="PANTHER" id="PTHR10366:SF564">
    <property type="entry name" value="STEROL-4-ALPHA-CARBOXYLATE 3-DEHYDROGENASE, DECARBOXYLATING"/>
    <property type="match status" value="1"/>
</dbReference>
<dbReference type="Pfam" id="PF01370">
    <property type="entry name" value="Epimerase"/>
    <property type="match status" value="1"/>
</dbReference>
<dbReference type="SUPFAM" id="SSF51735">
    <property type="entry name" value="NAD(P)-binding Rossmann-fold domains"/>
    <property type="match status" value="1"/>
</dbReference>
<proteinExistence type="inferred from homology"/>
<sequence>MDGNKGPVVVTGASGFVGSWLVMKLLQAGYTVRATVRDPANVEKTKPLLELPGAKERLSIWKADLSEDGSFNEAIAGCTGVFHVATPMDFDSQDPENEVIKPTVEGMLSIMRACKEAGTVKRIVFTSSAGSVNIEERPRPAYDQDNWSDIDYCRRVKMTGWMYFVSKALAEKAAMEYASENGLDFISIIPTLVVGPFLSAGMPPSLVTALALITGNEAHYSILKQVQLVHLDDLCDAMTFLFEHPEANGRYICSSHDATIHGLARMLQDRFPEYDIPQKFAGVDDNLQPIHFSSKKLLDHGFSFRYTTEDMFDAAIHTCRDKGLIPLGDVPAPAAGGKLGALAAGEGQAIGAET</sequence>